<sequence length="491" mass="55921">MAFYSYNSVLAIARTRFPSHFVHPTCSSYSPSCAFLHLPDSHLNKTCMKNYESKKYSDPSQPGNTVLHPGTRLIQKLHTSTCWLQEVPGKPQLEQATKHPQVTSPQATKETGMEIKEGKQSYRQKIMDELKYYYNGFYLLWIDAKVAARMVWRLLHGQVLTRRERRRLLRTCVDFFRLVPFMVFLIVPFMEFLLPVFLKLFPEMLPSTFESESKKEEKQKKKMAVKLELAKFLQETMTEMARRNRAKMGDASTQLSSYVKQVQTGHKPSTKEIVRFSKLFEDQLALEHLDRPQLVALCKLLELQTFGTNNLLRFQLLMKLKSIKADDEIIAKEGVTALSVSELQAACRARGMRSLGLTEEQLRQQLTEWQDLHLKENVPPSLLLLSRTFYLIDVKPKPIEIPLSGEAPKTDILVELPTFTESKENMVDLAPQLKGTKDEDFIQPPPVTSSPITPSTPISLPKGPITSSEEPTLQAKSQMTAQNSKASSKGA</sequence>
<keyword id="KW-0025">Alternative splicing</keyword>
<keyword id="KW-0175">Coiled coil</keyword>
<keyword id="KW-0472">Membrane</keyword>
<keyword id="KW-0496">Mitochondrion</keyword>
<keyword id="KW-0999">Mitochondrion inner membrane</keyword>
<keyword id="KW-1267">Proteomics identification</keyword>
<keyword id="KW-1185">Reference proteome</keyword>
<keyword id="KW-0809">Transit peptide</keyword>
<keyword id="KW-0812">Transmembrane</keyword>
<keyword id="KW-1133">Transmembrane helix</keyword>
<feature type="transit peptide" description="Mitochondrion" evidence="2">
    <location>
        <begin position="1"/>
        <end position="25"/>
    </location>
</feature>
<feature type="chain" id="PRO_0000307137" description="LETM1 domain-containing protein LETM2, mitochondrial">
    <location>
        <begin position="26"/>
        <end position="491"/>
    </location>
</feature>
<feature type="topological domain" description="Mitochondrial intermembrane" evidence="2">
    <location>
        <begin position="26"/>
        <end position="177"/>
    </location>
</feature>
<feature type="transmembrane region" description="Helical" evidence="2">
    <location>
        <begin position="178"/>
        <end position="198"/>
    </location>
</feature>
<feature type="topological domain" description="Mitochondrial matrix" evidence="2">
    <location>
        <begin position="199"/>
        <end position="491"/>
    </location>
</feature>
<feature type="domain" description="Letm1 RBD" evidence="3">
    <location>
        <begin position="221"/>
        <end position="438"/>
    </location>
</feature>
<feature type="region of interest" description="Disordered" evidence="4">
    <location>
        <begin position="94"/>
        <end position="115"/>
    </location>
</feature>
<feature type="region of interest" description="Disordered" evidence="4">
    <location>
        <begin position="435"/>
        <end position="491"/>
    </location>
</feature>
<feature type="coiled-coil region" evidence="2">
    <location>
        <begin position="208"/>
        <end position="235"/>
    </location>
</feature>
<feature type="compositionally biased region" description="Polar residues" evidence="4">
    <location>
        <begin position="94"/>
        <end position="109"/>
    </location>
</feature>
<feature type="compositionally biased region" description="Low complexity" evidence="4">
    <location>
        <begin position="449"/>
        <end position="461"/>
    </location>
</feature>
<feature type="compositionally biased region" description="Polar residues" evidence="4">
    <location>
        <begin position="465"/>
        <end position="491"/>
    </location>
</feature>
<feature type="splice variant" id="VSP_028588" description="In isoform 4." evidence="6">
    <location>
        <begin position="1"/>
        <end position="214"/>
    </location>
</feature>
<feature type="splice variant" id="VSP_028589" description="In isoform 2 and isoform 3." evidence="5 7">
    <location>
        <begin position="1"/>
        <end position="47"/>
    </location>
</feature>
<feature type="splice variant" id="VSP_028590" description="In isoform 3." evidence="5">
    <location>
        <begin position="168"/>
        <end position="215"/>
    </location>
</feature>
<feature type="splice variant" id="VSP_028591" description="In isoform 4." evidence="6">
    <original>K</original>
    <variation>M</variation>
    <location>
        <position position="215"/>
    </location>
</feature>
<feature type="sequence conflict" description="In Ref. 1; AAO49715." evidence="8" ref="1">
    <original>T</original>
    <variation>A</variation>
    <location>
        <position position="448"/>
    </location>
</feature>
<evidence type="ECO:0000250" key="1"/>
<evidence type="ECO:0000255" key="2"/>
<evidence type="ECO:0000255" key="3">
    <source>
        <dbReference type="PROSITE-ProRule" id="PRU01094"/>
    </source>
</evidence>
<evidence type="ECO:0000256" key="4">
    <source>
        <dbReference type="SAM" id="MobiDB-lite"/>
    </source>
</evidence>
<evidence type="ECO:0000303" key="5">
    <source>
    </source>
</evidence>
<evidence type="ECO:0000303" key="6">
    <source>
    </source>
</evidence>
<evidence type="ECO:0000303" key="7">
    <source ref="1"/>
</evidence>
<evidence type="ECO:0000305" key="8"/>
<proteinExistence type="evidence at protein level"/>
<comment type="subcellular location">
    <subcellularLocation>
        <location evidence="1">Mitochondrion inner membrane</location>
        <topology evidence="1">Single-pass membrane protein</topology>
    </subcellularLocation>
</comment>
<comment type="alternative products">
    <event type="alternative splicing"/>
    <isoform>
        <id>Q2VYF4-1</id>
        <name>1</name>
        <sequence type="displayed"/>
    </isoform>
    <isoform>
        <id>Q2VYF4-2</id>
        <name>2</name>
        <sequence type="described" ref="VSP_028589"/>
    </isoform>
    <isoform>
        <id>Q2VYF4-3</id>
        <name>3</name>
        <sequence type="described" ref="VSP_028589 VSP_028590"/>
    </isoform>
    <isoform>
        <id>Q2VYF4-4</id>
        <name>4</name>
        <sequence type="described" ref="VSP_028588 VSP_028591"/>
    </isoform>
</comment>
<comment type="caution">
    <text evidence="8">Despite its name, it does not contain any EF-hand domains.</text>
</comment>
<reference key="1">
    <citation type="submission" date="2002-11" db="EMBL/GenBank/DDBJ databases">
        <title>Characterization of a novel gene similar to leucine zipper-EF-hand containing transmembrane protein 1 (LETM1).</title>
        <authorList>
            <person name="Xu J."/>
            <person name="Xie Y."/>
            <person name="Mao Y."/>
        </authorList>
    </citation>
    <scope>NUCLEOTIDE SEQUENCE [MRNA] (ISOFORM 2)</scope>
</reference>
<reference key="2">
    <citation type="journal article" date="2004" name="Nat. Genet.">
        <title>Complete sequencing and characterization of 21,243 full-length human cDNAs.</title>
        <authorList>
            <person name="Ota T."/>
            <person name="Suzuki Y."/>
            <person name="Nishikawa T."/>
            <person name="Otsuki T."/>
            <person name="Sugiyama T."/>
            <person name="Irie R."/>
            <person name="Wakamatsu A."/>
            <person name="Hayashi K."/>
            <person name="Sato H."/>
            <person name="Nagai K."/>
            <person name="Kimura K."/>
            <person name="Makita H."/>
            <person name="Sekine M."/>
            <person name="Obayashi M."/>
            <person name="Nishi T."/>
            <person name="Shibahara T."/>
            <person name="Tanaka T."/>
            <person name="Ishii S."/>
            <person name="Yamamoto J."/>
            <person name="Saito K."/>
            <person name="Kawai Y."/>
            <person name="Isono Y."/>
            <person name="Nakamura Y."/>
            <person name="Nagahari K."/>
            <person name="Murakami K."/>
            <person name="Yasuda T."/>
            <person name="Iwayanagi T."/>
            <person name="Wagatsuma M."/>
            <person name="Shiratori A."/>
            <person name="Sudo H."/>
            <person name="Hosoiri T."/>
            <person name="Kaku Y."/>
            <person name="Kodaira H."/>
            <person name="Kondo H."/>
            <person name="Sugawara M."/>
            <person name="Takahashi M."/>
            <person name="Kanda K."/>
            <person name="Yokoi T."/>
            <person name="Furuya T."/>
            <person name="Kikkawa E."/>
            <person name="Omura Y."/>
            <person name="Abe K."/>
            <person name="Kamihara K."/>
            <person name="Katsuta N."/>
            <person name="Sato K."/>
            <person name="Tanikawa M."/>
            <person name="Yamazaki M."/>
            <person name="Ninomiya K."/>
            <person name="Ishibashi T."/>
            <person name="Yamashita H."/>
            <person name="Murakawa K."/>
            <person name="Fujimori K."/>
            <person name="Tanai H."/>
            <person name="Kimata M."/>
            <person name="Watanabe M."/>
            <person name="Hiraoka S."/>
            <person name="Chiba Y."/>
            <person name="Ishida S."/>
            <person name="Ono Y."/>
            <person name="Takiguchi S."/>
            <person name="Watanabe S."/>
            <person name="Yosida M."/>
            <person name="Hotuta T."/>
            <person name="Kusano J."/>
            <person name="Kanehori K."/>
            <person name="Takahashi-Fujii A."/>
            <person name="Hara H."/>
            <person name="Tanase T.-O."/>
            <person name="Nomura Y."/>
            <person name="Togiya S."/>
            <person name="Komai F."/>
            <person name="Hara R."/>
            <person name="Takeuchi K."/>
            <person name="Arita M."/>
            <person name="Imose N."/>
            <person name="Musashino K."/>
            <person name="Yuuki H."/>
            <person name="Oshima A."/>
            <person name="Sasaki N."/>
            <person name="Aotsuka S."/>
            <person name="Yoshikawa Y."/>
            <person name="Matsunawa H."/>
            <person name="Ichihara T."/>
            <person name="Shiohata N."/>
            <person name="Sano S."/>
            <person name="Moriya S."/>
            <person name="Momiyama H."/>
            <person name="Satoh N."/>
            <person name="Takami S."/>
            <person name="Terashima Y."/>
            <person name="Suzuki O."/>
            <person name="Nakagawa S."/>
            <person name="Senoh A."/>
            <person name="Mizoguchi H."/>
            <person name="Goto Y."/>
            <person name="Shimizu F."/>
            <person name="Wakebe H."/>
            <person name="Hishigaki H."/>
            <person name="Watanabe T."/>
            <person name="Sugiyama A."/>
            <person name="Takemoto M."/>
            <person name="Kawakami B."/>
            <person name="Yamazaki M."/>
            <person name="Watanabe K."/>
            <person name="Kumagai A."/>
            <person name="Itakura S."/>
            <person name="Fukuzumi Y."/>
            <person name="Fujimori Y."/>
            <person name="Komiyama M."/>
            <person name="Tashiro H."/>
            <person name="Tanigami A."/>
            <person name="Fujiwara T."/>
            <person name="Ono T."/>
            <person name="Yamada K."/>
            <person name="Fujii Y."/>
            <person name="Ozaki K."/>
            <person name="Hirao M."/>
            <person name="Ohmori Y."/>
            <person name="Kawabata A."/>
            <person name="Hikiji T."/>
            <person name="Kobatake N."/>
            <person name="Inagaki H."/>
            <person name="Ikema Y."/>
            <person name="Okamoto S."/>
            <person name="Okitani R."/>
            <person name="Kawakami T."/>
            <person name="Noguchi S."/>
            <person name="Itoh T."/>
            <person name="Shigeta K."/>
            <person name="Senba T."/>
            <person name="Matsumura K."/>
            <person name="Nakajima Y."/>
            <person name="Mizuno T."/>
            <person name="Morinaga M."/>
            <person name="Sasaki M."/>
            <person name="Togashi T."/>
            <person name="Oyama M."/>
            <person name="Hata H."/>
            <person name="Watanabe M."/>
            <person name="Komatsu T."/>
            <person name="Mizushima-Sugano J."/>
            <person name="Satoh T."/>
            <person name="Shirai Y."/>
            <person name="Takahashi Y."/>
            <person name="Nakagawa K."/>
            <person name="Okumura K."/>
            <person name="Nagase T."/>
            <person name="Nomura N."/>
            <person name="Kikuchi H."/>
            <person name="Masuho Y."/>
            <person name="Yamashita R."/>
            <person name="Nakai K."/>
            <person name="Yada T."/>
            <person name="Nakamura Y."/>
            <person name="Ohara O."/>
            <person name="Isogai T."/>
            <person name="Sugano S."/>
        </authorList>
    </citation>
    <scope>NUCLEOTIDE SEQUENCE [LARGE SCALE MRNA] (ISOFORM 3)</scope>
    <source>
        <tissue>Testis</tissue>
    </source>
</reference>
<reference key="3">
    <citation type="journal article" date="2006" name="Nature">
        <title>DNA sequence and analysis of human chromosome 8.</title>
        <authorList>
            <person name="Nusbaum C."/>
            <person name="Mikkelsen T.S."/>
            <person name="Zody M.C."/>
            <person name="Asakawa S."/>
            <person name="Taudien S."/>
            <person name="Garber M."/>
            <person name="Kodira C.D."/>
            <person name="Schueler M.G."/>
            <person name="Shimizu A."/>
            <person name="Whittaker C.A."/>
            <person name="Chang J.L."/>
            <person name="Cuomo C.A."/>
            <person name="Dewar K."/>
            <person name="FitzGerald M.G."/>
            <person name="Yang X."/>
            <person name="Allen N.R."/>
            <person name="Anderson S."/>
            <person name="Asakawa T."/>
            <person name="Blechschmidt K."/>
            <person name="Bloom T."/>
            <person name="Borowsky M.L."/>
            <person name="Butler J."/>
            <person name="Cook A."/>
            <person name="Corum B."/>
            <person name="DeArellano K."/>
            <person name="DeCaprio D."/>
            <person name="Dooley K.T."/>
            <person name="Dorris L. III"/>
            <person name="Engels R."/>
            <person name="Gloeckner G."/>
            <person name="Hafez N."/>
            <person name="Hagopian D.S."/>
            <person name="Hall J.L."/>
            <person name="Ishikawa S.K."/>
            <person name="Jaffe D.B."/>
            <person name="Kamat A."/>
            <person name="Kudoh J."/>
            <person name="Lehmann R."/>
            <person name="Lokitsang T."/>
            <person name="Macdonald P."/>
            <person name="Major J.E."/>
            <person name="Matthews C.D."/>
            <person name="Mauceli E."/>
            <person name="Menzel U."/>
            <person name="Mihalev A.H."/>
            <person name="Minoshima S."/>
            <person name="Murayama Y."/>
            <person name="Naylor J.W."/>
            <person name="Nicol R."/>
            <person name="Nguyen C."/>
            <person name="O'Leary S.B."/>
            <person name="O'Neill K."/>
            <person name="Parker S.C.J."/>
            <person name="Polley A."/>
            <person name="Raymond C.K."/>
            <person name="Reichwald K."/>
            <person name="Rodriguez J."/>
            <person name="Sasaki T."/>
            <person name="Schilhabel M."/>
            <person name="Siddiqui R."/>
            <person name="Smith C.L."/>
            <person name="Sneddon T.P."/>
            <person name="Talamas J.A."/>
            <person name="Tenzin P."/>
            <person name="Topham K."/>
            <person name="Venkataraman V."/>
            <person name="Wen G."/>
            <person name="Yamazaki S."/>
            <person name="Young S.K."/>
            <person name="Zeng Q."/>
            <person name="Zimmer A.R."/>
            <person name="Rosenthal A."/>
            <person name="Birren B.W."/>
            <person name="Platzer M."/>
            <person name="Shimizu N."/>
            <person name="Lander E.S."/>
        </authorList>
    </citation>
    <scope>NUCLEOTIDE SEQUENCE [LARGE SCALE GENOMIC DNA]</scope>
</reference>
<reference key="4">
    <citation type="journal article" date="2004" name="Genome Res.">
        <title>The status, quality, and expansion of the NIH full-length cDNA project: the Mammalian Gene Collection (MGC).</title>
        <authorList>
            <consortium name="The MGC Project Team"/>
        </authorList>
    </citation>
    <scope>NUCLEOTIDE SEQUENCE [LARGE SCALE MRNA] (ISOFORM 4)</scope>
    <source>
        <tissue>Testis</tissue>
    </source>
</reference>
<dbReference type="EMBL" id="AY173945">
    <property type="protein sequence ID" value="AAO49715.1"/>
    <property type="molecule type" value="mRNA"/>
</dbReference>
<dbReference type="EMBL" id="AK058138">
    <property type="protein sequence ID" value="BAB71680.1"/>
    <property type="molecule type" value="mRNA"/>
</dbReference>
<dbReference type="EMBL" id="AC087623">
    <property type="status" value="NOT_ANNOTATED_CDS"/>
    <property type="molecule type" value="Genomic_DNA"/>
</dbReference>
<dbReference type="EMBL" id="BC029541">
    <property type="protein sequence ID" value="AAH29541.2"/>
    <property type="molecule type" value="mRNA"/>
</dbReference>
<dbReference type="CCDS" id="CCDS56534.1">
    <molecule id="Q2VYF4-2"/>
</dbReference>
<dbReference type="CCDS" id="CCDS6106.1">
    <molecule id="Q2VYF4-3"/>
</dbReference>
<dbReference type="CCDS" id="CCDS69466.1">
    <molecule id="Q2VYF4-1"/>
</dbReference>
<dbReference type="RefSeq" id="NP_001186588.1">
    <molecule id="Q2VYF4-2"/>
    <property type="nucleotide sequence ID" value="NM_001199659.3"/>
</dbReference>
<dbReference type="RefSeq" id="NP_001273748.1">
    <molecule id="Q2VYF4-1"/>
    <property type="nucleotide sequence ID" value="NM_001286819.2"/>
</dbReference>
<dbReference type="RefSeq" id="NP_653253.1">
    <molecule id="Q2VYF4-3"/>
    <property type="nucleotide sequence ID" value="NM_144652.4"/>
</dbReference>
<dbReference type="RefSeq" id="XP_011542708.1">
    <property type="nucleotide sequence ID" value="XM_011544406.1"/>
</dbReference>
<dbReference type="RefSeq" id="XP_011542709.1">
    <property type="nucleotide sequence ID" value="XM_011544407.1"/>
</dbReference>
<dbReference type="RefSeq" id="XP_011542712.1">
    <molecule id="Q2VYF4-4"/>
    <property type="nucleotide sequence ID" value="XM_011544410.3"/>
</dbReference>
<dbReference type="RefSeq" id="XP_016868540.1">
    <molecule id="Q2VYF4-1"/>
    <property type="nucleotide sequence ID" value="XM_017013051.2"/>
</dbReference>
<dbReference type="RefSeq" id="XP_016868541.1">
    <molecule id="Q2VYF4-1"/>
    <property type="nucleotide sequence ID" value="XM_017013052.2"/>
</dbReference>
<dbReference type="RefSeq" id="XP_016868542.1">
    <molecule id="Q2VYF4-1"/>
    <property type="nucleotide sequence ID" value="XM_017013053.2"/>
</dbReference>
<dbReference type="RefSeq" id="XP_016868543.1">
    <molecule id="Q2VYF4-1"/>
    <property type="nucleotide sequence ID" value="XM_017013054.2"/>
</dbReference>
<dbReference type="RefSeq" id="XP_016868544.1">
    <molecule id="Q2VYF4-1"/>
    <property type="nucleotide sequence ID" value="XM_017013055.2"/>
</dbReference>
<dbReference type="RefSeq" id="XP_016868545.1">
    <molecule id="Q2VYF4-1"/>
    <property type="nucleotide sequence ID" value="XM_017013056.2"/>
</dbReference>
<dbReference type="RefSeq" id="XP_054215756.1">
    <molecule id="Q2VYF4-1"/>
    <property type="nucleotide sequence ID" value="XM_054359781.1"/>
</dbReference>
<dbReference type="RefSeq" id="XP_054215757.1">
    <molecule id="Q2VYF4-1"/>
    <property type="nucleotide sequence ID" value="XM_054359782.1"/>
</dbReference>
<dbReference type="RefSeq" id="XP_054215758.1">
    <molecule id="Q2VYF4-1"/>
    <property type="nucleotide sequence ID" value="XM_054359783.1"/>
</dbReference>
<dbReference type="RefSeq" id="XP_054215759.1">
    <molecule id="Q2VYF4-1"/>
    <property type="nucleotide sequence ID" value="XM_054359784.1"/>
</dbReference>
<dbReference type="RefSeq" id="XP_054215760.1">
    <molecule id="Q2VYF4-1"/>
    <property type="nucleotide sequence ID" value="XM_054359785.1"/>
</dbReference>
<dbReference type="RefSeq" id="XP_054215761.1">
    <molecule id="Q2VYF4-1"/>
    <property type="nucleotide sequence ID" value="XM_054359786.1"/>
</dbReference>
<dbReference type="RefSeq" id="XP_054215764.1">
    <molecule id="Q2VYF4-4"/>
    <property type="nucleotide sequence ID" value="XM_054359789.1"/>
</dbReference>
<dbReference type="SMR" id="Q2VYF4"/>
<dbReference type="BioGRID" id="126495">
    <property type="interactions" value="23"/>
</dbReference>
<dbReference type="FunCoup" id="Q2VYF4">
    <property type="interactions" value="321"/>
</dbReference>
<dbReference type="IntAct" id="Q2VYF4">
    <property type="interactions" value="5"/>
</dbReference>
<dbReference type="STRING" id="9606.ENSP00000369291"/>
<dbReference type="TCDB" id="2.A.97.1.6">
    <property type="family name" value="the mitochondrial inner membrane k(+)/h(+) and ca(2+)/h(+) exchanger (letm1) family"/>
</dbReference>
<dbReference type="GlyGen" id="Q2VYF4">
    <property type="glycosylation" value="2 sites, 1 O-linked glycan (1 site)"/>
</dbReference>
<dbReference type="iPTMnet" id="Q2VYF4"/>
<dbReference type="PhosphoSitePlus" id="Q2VYF4"/>
<dbReference type="BioMuta" id="LETM2"/>
<dbReference type="DMDM" id="160013759"/>
<dbReference type="jPOST" id="Q2VYF4"/>
<dbReference type="MassIVE" id="Q2VYF4"/>
<dbReference type="PaxDb" id="9606-ENSP00000369291"/>
<dbReference type="PeptideAtlas" id="Q2VYF4"/>
<dbReference type="ProteomicsDB" id="61530">
    <molecule id="Q2VYF4-1"/>
</dbReference>
<dbReference type="ProteomicsDB" id="61531">
    <molecule id="Q2VYF4-2"/>
</dbReference>
<dbReference type="ProteomicsDB" id="61532">
    <molecule id="Q2VYF4-3"/>
</dbReference>
<dbReference type="ProteomicsDB" id="61533">
    <molecule id="Q2VYF4-4"/>
</dbReference>
<dbReference type="Antibodypedia" id="11001">
    <property type="antibodies" value="105 antibodies from 22 providers"/>
</dbReference>
<dbReference type="DNASU" id="137994"/>
<dbReference type="Ensembl" id="ENST00000297720.9">
    <molecule id="Q2VYF4-3"/>
    <property type="protein sequence ID" value="ENSP00000297720.5"/>
    <property type="gene ID" value="ENSG00000165046.13"/>
</dbReference>
<dbReference type="Ensembl" id="ENST00000379957.9">
    <molecule id="Q2VYF4-1"/>
    <property type="protein sequence ID" value="ENSP00000369291.4"/>
    <property type="gene ID" value="ENSG00000165046.13"/>
</dbReference>
<dbReference type="Ensembl" id="ENST00000523983.6">
    <molecule id="Q2VYF4-2"/>
    <property type="protein sequence ID" value="ENSP00000428765.2"/>
    <property type="gene ID" value="ENSG00000165046.13"/>
</dbReference>
<dbReference type="Ensembl" id="ENST00000527710.5">
    <molecule id="Q2VYF4-4"/>
    <property type="protein sequence ID" value="ENSP00000434867.1"/>
    <property type="gene ID" value="ENSG00000165046.13"/>
</dbReference>
<dbReference type="GeneID" id="137994"/>
<dbReference type="KEGG" id="hsa:137994"/>
<dbReference type="MANE-Select" id="ENST00000379957.9">
    <property type="protein sequence ID" value="ENSP00000369291.4"/>
    <property type="RefSeq nucleotide sequence ID" value="NM_001286819.2"/>
    <property type="RefSeq protein sequence ID" value="NP_001273748.1"/>
</dbReference>
<dbReference type="UCSC" id="uc003xll.4">
    <molecule id="Q2VYF4-1"/>
    <property type="organism name" value="human"/>
</dbReference>
<dbReference type="AGR" id="HGNC:14648"/>
<dbReference type="CTD" id="137994"/>
<dbReference type="DisGeNET" id="137994"/>
<dbReference type="GeneCards" id="LETM2"/>
<dbReference type="HGNC" id="HGNC:14648">
    <property type="gene designation" value="LETM2"/>
</dbReference>
<dbReference type="HPA" id="ENSG00000165046">
    <property type="expression patterns" value="Tissue enhanced (choroid plexus, testis)"/>
</dbReference>
<dbReference type="MIM" id="620380">
    <property type="type" value="gene"/>
</dbReference>
<dbReference type="neXtProt" id="NX_Q2VYF4"/>
<dbReference type="OpenTargets" id="ENSG00000165046"/>
<dbReference type="PharmGKB" id="PA134887111"/>
<dbReference type="VEuPathDB" id="HostDB:ENSG00000165046"/>
<dbReference type="eggNOG" id="KOG1043">
    <property type="taxonomic scope" value="Eukaryota"/>
</dbReference>
<dbReference type="GeneTree" id="ENSGT00950000183167"/>
<dbReference type="HOGENOM" id="CLU_008958_0_0_1"/>
<dbReference type="InParanoid" id="Q2VYF4"/>
<dbReference type="OMA" id="MAACGCN"/>
<dbReference type="OrthoDB" id="624114at2759"/>
<dbReference type="PAN-GO" id="Q2VYF4">
    <property type="GO annotations" value="1 GO annotation based on evolutionary models"/>
</dbReference>
<dbReference type="PhylomeDB" id="Q2VYF4"/>
<dbReference type="TreeFam" id="TF316321"/>
<dbReference type="PathwayCommons" id="Q2VYF4"/>
<dbReference type="SignaLink" id="Q2VYF4"/>
<dbReference type="BioGRID-ORCS" id="137994">
    <property type="hits" value="18 hits in 1156 CRISPR screens"/>
</dbReference>
<dbReference type="ChiTaRS" id="LETM2">
    <property type="organism name" value="human"/>
</dbReference>
<dbReference type="GenomeRNAi" id="137994"/>
<dbReference type="Pharos" id="Q2VYF4">
    <property type="development level" value="Tbio"/>
</dbReference>
<dbReference type="PRO" id="PR:Q2VYF4"/>
<dbReference type="Proteomes" id="UP000005640">
    <property type="component" value="Chromosome 8"/>
</dbReference>
<dbReference type="RNAct" id="Q2VYF4">
    <property type="molecule type" value="protein"/>
</dbReference>
<dbReference type="Bgee" id="ENSG00000165046">
    <property type="expression patterns" value="Expressed in left testis and 110 other cell types or tissues"/>
</dbReference>
<dbReference type="ExpressionAtlas" id="Q2VYF4">
    <property type="expression patterns" value="baseline and differential"/>
</dbReference>
<dbReference type="GO" id="GO:0005743">
    <property type="term" value="C:mitochondrial inner membrane"/>
    <property type="evidence" value="ECO:0007669"/>
    <property type="project" value="UniProtKB-SubCell"/>
</dbReference>
<dbReference type="GO" id="GO:0005739">
    <property type="term" value="C:mitochondrion"/>
    <property type="evidence" value="ECO:0006056"/>
    <property type="project" value="FlyBase"/>
</dbReference>
<dbReference type="GO" id="GO:0043022">
    <property type="term" value="F:ribosome binding"/>
    <property type="evidence" value="ECO:0007669"/>
    <property type="project" value="InterPro"/>
</dbReference>
<dbReference type="GO" id="GO:0022857">
    <property type="term" value="F:transmembrane transporter activity"/>
    <property type="evidence" value="ECO:0000318"/>
    <property type="project" value="GO_Central"/>
</dbReference>
<dbReference type="GO" id="GO:0006851">
    <property type="term" value="P:mitochondrial calcium ion transmembrane transport"/>
    <property type="evidence" value="ECO:0000318"/>
    <property type="project" value="GO_Central"/>
</dbReference>
<dbReference type="GO" id="GO:0007005">
    <property type="term" value="P:mitochondrion organization"/>
    <property type="evidence" value="ECO:0000318"/>
    <property type="project" value="GO_Central"/>
</dbReference>
<dbReference type="InterPro" id="IPR033122">
    <property type="entry name" value="LETM1-like_RBD"/>
</dbReference>
<dbReference type="InterPro" id="IPR044202">
    <property type="entry name" value="LETM1/MDM38-like"/>
</dbReference>
<dbReference type="InterPro" id="IPR045742">
    <property type="entry name" value="LETM2_N"/>
</dbReference>
<dbReference type="PANTHER" id="PTHR14009:SF7">
    <property type="entry name" value="LETM1 DOMAIN-CONTAINING PROTEIN LETM2, MITOCHONDRIAL"/>
    <property type="match status" value="1"/>
</dbReference>
<dbReference type="PANTHER" id="PTHR14009">
    <property type="entry name" value="LEUCINE ZIPPER-EF-HAND CONTAINING TRANSMEMBRANE PROTEIN"/>
    <property type="match status" value="1"/>
</dbReference>
<dbReference type="Pfam" id="PF07766">
    <property type="entry name" value="LETM1_RBD"/>
    <property type="match status" value="1"/>
</dbReference>
<dbReference type="Pfam" id="PF19324">
    <property type="entry name" value="LETM2_N"/>
    <property type="match status" value="1"/>
</dbReference>
<dbReference type="PROSITE" id="PS51758">
    <property type="entry name" value="LETM1_RBD"/>
    <property type="match status" value="1"/>
</dbReference>
<name>LETM2_HUMAN</name>
<organism>
    <name type="scientific">Homo sapiens</name>
    <name type="common">Human</name>
    <dbReference type="NCBI Taxonomy" id="9606"/>
    <lineage>
        <taxon>Eukaryota</taxon>
        <taxon>Metazoa</taxon>
        <taxon>Chordata</taxon>
        <taxon>Craniata</taxon>
        <taxon>Vertebrata</taxon>
        <taxon>Euteleostomi</taxon>
        <taxon>Mammalia</taxon>
        <taxon>Eutheria</taxon>
        <taxon>Euarchontoglires</taxon>
        <taxon>Primates</taxon>
        <taxon>Haplorrhini</taxon>
        <taxon>Catarrhini</taxon>
        <taxon>Hominidae</taxon>
        <taxon>Homo</taxon>
    </lineage>
</organism>
<accession>Q2VYF4</accession>
<accession>A6NMG3</accession>
<accession>Q8NCR2</accession>
<accession>Q96LL1</accession>
<gene>
    <name type="primary">LETM2</name>
</gene>
<protein>
    <recommendedName>
        <fullName>LETM1 domain-containing protein LETM2, mitochondrial</fullName>
    </recommendedName>
    <alternativeName>
        <fullName>LETM1 and EF-hand domain-containing protein 2</fullName>
    </alternativeName>
    <alternativeName>
        <fullName>Leucine zipper-EF-hand-containing transmembrane protein 1-like</fullName>
    </alternativeName>
</protein>